<reference key="1">
    <citation type="journal article" date="2011" name="J. Bacteriol.">
        <title>Genome sequence of lineage III Listeria monocytogenes strain HCC23.</title>
        <authorList>
            <person name="Steele C.L."/>
            <person name="Donaldson J.R."/>
            <person name="Paul D."/>
            <person name="Banes M.M."/>
            <person name="Arick T."/>
            <person name="Bridges S.M."/>
            <person name="Lawrence M.L."/>
        </authorList>
    </citation>
    <scope>NUCLEOTIDE SEQUENCE [LARGE SCALE GENOMIC DNA]</scope>
    <source>
        <strain>HCC23</strain>
    </source>
</reference>
<comment type="similarity">
    <text evidence="1">Belongs to the bacterial ribosomal protein bL28 family.</text>
</comment>
<sequence length="62" mass="6991">MAKECVITGRKSRSGNKRSHAMNSSKRTWKANLQKVRILVNGKPKKVWVSARALKSGKVERV</sequence>
<feature type="chain" id="PRO_1000195929" description="Large ribosomal subunit protein bL28">
    <location>
        <begin position="1"/>
        <end position="62"/>
    </location>
</feature>
<feature type="region of interest" description="Disordered" evidence="2">
    <location>
        <begin position="1"/>
        <end position="27"/>
    </location>
</feature>
<feature type="compositionally biased region" description="Basic residues" evidence="2">
    <location>
        <begin position="10"/>
        <end position="20"/>
    </location>
</feature>
<name>RL28_LISMH</name>
<organism>
    <name type="scientific">Listeria monocytogenes serotype 4a (strain HCC23)</name>
    <dbReference type="NCBI Taxonomy" id="552536"/>
    <lineage>
        <taxon>Bacteria</taxon>
        <taxon>Bacillati</taxon>
        <taxon>Bacillota</taxon>
        <taxon>Bacilli</taxon>
        <taxon>Bacillales</taxon>
        <taxon>Listeriaceae</taxon>
        <taxon>Listeria</taxon>
    </lineage>
</organism>
<proteinExistence type="inferred from homology"/>
<gene>
    <name evidence="1" type="primary">rpmB</name>
    <name type="ordered locus">LMHCC_0741</name>
</gene>
<evidence type="ECO:0000255" key="1">
    <source>
        <dbReference type="HAMAP-Rule" id="MF_00373"/>
    </source>
</evidence>
<evidence type="ECO:0000256" key="2">
    <source>
        <dbReference type="SAM" id="MobiDB-lite"/>
    </source>
</evidence>
<evidence type="ECO:0000305" key="3"/>
<keyword id="KW-0687">Ribonucleoprotein</keyword>
<keyword id="KW-0689">Ribosomal protein</keyword>
<accession>B8DDT6</accession>
<dbReference type="EMBL" id="CP001175">
    <property type="protein sequence ID" value="ACK39095.1"/>
    <property type="molecule type" value="Genomic_DNA"/>
</dbReference>
<dbReference type="RefSeq" id="WP_003720131.1">
    <property type="nucleotide sequence ID" value="NC_011660.1"/>
</dbReference>
<dbReference type="SMR" id="B8DDT6"/>
<dbReference type="GeneID" id="93239727"/>
<dbReference type="KEGG" id="lmh:LMHCC_0741"/>
<dbReference type="HOGENOM" id="CLU_064548_7_1_9"/>
<dbReference type="GO" id="GO:1990904">
    <property type="term" value="C:ribonucleoprotein complex"/>
    <property type="evidence" value="ECO:0007669"/>
    <property type="project" value="UniProtKB-KW"/>
</dbReference>
<dbReference type="GO" id="GO:0005840">
    <property type="term" value="C:ribosome"/>
    <property type="evidence" value="ECO:0007669"/>
    <property type="project" value="UniProtKB-KW"/>
</dbReference>
<dbReference type="GO" id="GO:0003735">
    <property type="term" value="F:structural constituent of ribosome"/>
    <property type="evidence" value="ECO:0007669"/>
    <property type="project" value="InterPro"/>
</dbReference>
<dbReference type="GO" id="GO:0006412">
    <property type="term" value="P:translation"/>
    <property type="evidence" value="ECO:0007669"/>
    <property type="project" value="UniProtKB-UniRule"/>
</dbReference>
<dbReference type="Gene3D" id="2.30.170.40">
    <property type="entry name" value="Ribosomal protein L28/L24"/>
    <property type="match status" value="1"/>
</dbReference>
<dbReference type="HAMAP" id="MF_00373">
    <property type="entry name" value="Ribosomal_bL28"/>
    <property type="match status" value="1"/>
</dbReference>
<dbReference type="InterPro" id="IPR050096">
    <property type="entry name" value="Bacterial_rp_bL28"/>
</dbReference>
<dbReference type="InterPro" id="IPR026569">
    <property type="entry name" value="Ribosomal_bL28"/>
</dbReference>
<dbReference type="InterPro" id="IPR034704">
    <property type="entry name" value="Ribosomal_bL28/bL31-like_sf"/>
</dbReference>
<dbReference type="InterPro" id="IPR001383">
    <property type="entry name" value="Ribosomal_bL28_bact-type"/>
</dbReference>
<dbReference type="InterPro" id="IPR037147">
    <property type="entry name" value="Ribosomal_bL28_sf"/>
</dbReference>
<dbReference type="NCBIfam" id="TIGR00009">
    <property type="entry name" value="L28"/>
    <property type="match status" value="1"/>
</dbReference>
<dbReference type="PANTHER" id="PTHR39080">
    <property type="entry name" value="50S RIBOSOMAL PROTEIN L28"/>
    <property type="match status" value="1"/>
</dbReference>
<dbReference type="PANTHER" id="PTHR39080:SF1">
    <property type="entry name" value="LARGE RIBOSOMAL SUBUNIT PROTEIN BL28A"/>
    <property type="match status" value="1"/>
</dbReference>
<dbReference type="Pfam" id="PF00830">
    <property type="entry name" value="Ribosomal_L28"/>
    <property type="match status" value="1"/>
</dbReference>
<dbReference type="SUPFAM" id="SSF143800">
    <property type="entry name" value="L28p-like"/>
    <property type="match status" value="1"/>
</dbReference>
<protein>
    <recommendedName>
        <fullName evidence="1">Large ribosomal subunit protein bL28</fullName>
    </recommendedName>
    <alternativeName>
        <fullName evidence="3">50S ribosomal protein L28</fullName>
    </alternativeName>
</protein>